<name>KASH5_BOVIN</name>
<dbReference type="EMBL" id="DAAA02047474">
    <property type="status" value="NOT_ANNOTATED_CDS"/>
    <property type="molecule type" value="Genomic_DNA"/>
</dbReference>
<dbReference type="EMBL" id="BC111305">
    <property type="protein sequence ID" value="AAI11306.1"/>
    <property type="molecule type" value="mRNA"/>
</dbReference>
<dbReference type="RefSeq" id="NP_001070414.1">
    <property type="nucleotide sequence ID" value="NM_001076946.2"/>
</dbReference>
<dbReference type="SMR" id="Q2T9R2"/>
<dbReference type="FunCoup" id="Q2T9R2">
    <property type="interactions" value="46"/>
</dbReference>
<dbReference type="STRING" id="9913.ENSBTAP00000040719"/>
<dbReference type="PaxDb" id="9913-ENSBTAP00000040719"/>
<dbReference type="GeneID" id="617651"/>
<dbReference type="KEGG" id="bta:617651"/>
<dbReference type="CTD" id="147872"/>
<dbReference type="eggNOG" id="ENOG502RXNC">
    <property type="taxonomic scope" value="Eukaryota"/>
</dbReference>
<dbReference type="HOGENOM" id="CLU_039584_1_0_1"/>
<dbReference type="InParanoid" id="Q2T9R2"/>
<dbReference type="OrthoDB" id="9943648at2759"/>
<dbReference type="TreeFam" id="TF337560"/>
<dbReference type="Proteomes" id="UP000009136">
    <property type="component" value="Unplaced"/>
</dbReference>
<dbReference type="GO" id="GO:0000781">
    <property type="term" value="C:chromosome, telomeric region"/>
    <property type="evidence" value="ECO:0000250"/>
    <property type="project" value="UniProtKB"/>
</dbReference>
<dbReference type="GO" id="GO:0000800">
    <property type="term" value="C:lateral element"/>
    <property type="evidence" value="ECO:0000318"/>
    <property type="project" value="GO_Central"/>
</dbReference>
<dbReference type="GO" id="GO:0034993">
    <property type="term" value="C:meiotic nuclear membrane microtubule tethering complex"/>
    <property type="evidence" value="ECO:0000318"/>
    <property type="project" value="GO_Central"/>
</dbReference>
<dbReference type="GO" id="GO:0090619">
    <property type="term" value="C:meiotic spindle pole"/>
    <property type="evidence" value="ECO:0000318"/>
    <property type="project" value="GO_Central"/>
</dbReference>
<dbReference type="GO" id="GO:0005640">
    <property type="term" value="C:nuclear outer membrane"/>
    <property type="evidence" value="ECO:0000318"/>
    <property type="project" value="GO_Central"/>
</dbReference>
<dbReference type="GO" id="GO:0070840">
    <property type="term" value="F:dynein complex binding"/>
    <property type="evidence" value="ECO:0000318"/>
    <property type="project" value="GO_Central"/>
</dbReference>
<dbReference type="GO" id="GO:0007015">
    <property type="term" value="P:actin filament organization"/>
    <property type="evidence" value="ECO:0000318"/>
    <property type="project" value="GO_Central"/>
</dbReference>
<dbReference type="GO" id="GO:0090220">
    <property type="term" value="P:chromosome localization to nuclear envelope involved in homologous chromosome segregation"/>
    <property type="evidence" value="ECO:0000318"/>
    <property type="project" value="GO_Central"/>
</dbReference>
<dbReference type="GO" id="GO:0007129">
    <property type="term" value="P:homologous chromosome pairing at meiosis"/>
    <property type="evidence" value="ECO:0000318"/>
    <property type="project" value="GO_Central"/>
</dbReference>
<dbReference type="GO" id="GO:0051225">
    <property type="term" value="P:spindle assembly"/>
    <property type="evidence" value="ECO:0000318"/>
    <property type="project" value="GO_Central"/>
</dbReference>
<dbReference type="GO" id="GO:0051653">
    <property type="term" value="P:spindle localization"/>
    <property type="evidence" value="ECO:0000318"/>
    <property type="project" value="GO_Central"/>
</dbReference>
<dbReference type="GO" id="GO:0034397">
    <property type="term" value="P:telomere localization"/>
    <property type="evidence" value="ECO:0000318"/>
    <property type="project" value="GO_Central"/>
</dbReference>
<dbReference type="InterPro" id="IPR028170">
    <property type="entry name" value="KASH5"/>
</dbReference>
<dbReference type="InterPro" id="IPR028168">
    <property type="entry name" value="KASH5_coiled-coil"/>
</dbReference>
<dbReference type="InterPro" id="IPR039508">
    <property type="entry name" value="KASH5_EF-hand-like_dom"/>
</dbReference>
<dbReference type="PANTHER" id="PTHR47300">
    <property type="entry name" value="PROTEIN KASH5"/>
    <property type="match status" value="1"/>
</dbReference>
<dbReference type="PANTHER" id="PTHR47300:SF1">
    <property type="entry name" value="PROTEIN KASH5"/>
    <property type="match status" value="1"/>
</dbReference>
<dbReference type="Pfam" id="PF14658">
    <property type="entry name" value="EF-hand_9"/>
    <property type="match status" value="1"/>
</dbReference>
<dbReference type="Pfam" id="PF14662">
    <property type="entry name" value="KASH_CCD"/>
    <property type="match status" value="1"/>
</dbReference>
<gene>
    <name type="primary">KASH5</name>
    <name type="synonym">CCDC155</name>
</gene>
<organism>
    <name type="scientific">Bos taurus</name>
    <name type="common">Bovine</name>
    <dbReference type="NCBI Taxonomy" id="9913"/>
    <lineage>
        <taxon>Eukaryota</taxon>
        <taxon>Metazoa</taxon>
        <taxon>Chordata</taxon>
        <taxon>Craniata</taxon>
        <taxon>Vertebrata</taxon>
        <taxon>Euteleostomi</taxon>
        <taxon>Mammalia</taxon>
        <taxon>Eutheria</taxon>
        <taxon>Laurasiatheria</taxon>
        <taxon>Artiodactyla</taxon>
        <taxon>Ruminantia</taxon>
        <taxon>Pecora</taxon>
        <taxon>Bovidae</taxon>
        <taxon>Bovinae</taxon>
        <taxon>Bos</taxon>
    </lineage>
</organism>
<comment type="function">
    <text evidence="2">As a component of the LINC (LInker of Nucleoskeleton and Cytoskeleton) complex, involved in the connection between the nuclear lamina and the cytoskeleton. The nucleocytoplasmic interactions established by the LINC complex play an important role in the transmission of mechanical forces across the nuclear envelope and in nuclear movement and positioning. Required for telomere attachment to nuclear envelope in the prophase of meiosis and for rapid telomere prophase movements implicating a SUN1/2:KASH5 LINC complex in which SUN1 and SUN2 seem to act at least partial redundantly. Required for homolog pairing during meiotic prophase in spermatocytes and probably oocytes. Essential for male and female gametogenesis. Recruits cytoplasmic dynein to telomere attachment sites at the nuclear envelope in spermatocytes. In oocytes is involved in meiotic resumption and spindle formation.</text>
</comment>
<comment type="subunit">
    <text evidence="2">Core component the LINC complex which is composed of inner nuclear membrane SUN domain-containing proteins coupled to outer nuclear membrane KASH domain-containing nesprins. SUN and KASH domain-containing proteins seem to bind each other promiscuously; however, differentially expression of LINC complex constituents is giving rise to specific assemblies. At least SUN1/2-containing core LINC complexes are proposed to be hexameric composed of three protomers of each KASH and SUN domain-containing protein. Interacts with SUN1; this interaction mediates its telomere localization by forming a SUN1:KASH5 LINC complex. Component of a probable SUN2:KASH5 LINC complex. Self-associates. Interacts with DYNC1H1, DCTN1, DYNC1I1/2 and PAFAH1B1; suggesting the association with the dynein-dynactin motor complex.</text>
</comment>
<comment type="subcellular location">
    <subcellularLocation>
        <location evidence="2 6">Nucleus outer membrane</location>
        <topology evidence="6">Single-pass type IV membrane protein</topology>
        <orientation evidence="6">Cytoplasmic side</orientation>
    </subcellularLocation>
    <subcellularLocation>
        <location evidence="2">Nucleus</location>
    </subcellularLocation>
    <subcellularLocation>
        <location evidence="2">Chromosome</location>
        <location evidence="2">Telomere</location>
    </subcellularLocation>
    <subcellularLocation>
        <location evidence="3">Nucleus envelope</location>
    </subcellularLocation>
    <text evidence="2">Localized exclusively at telomeres from the leptotene to diplotene stages. Colocalizes with SUN2 at sites of telomere attachment in meiocytes. At oocyte MI stage localized around the spindle, at MII stage localized to the spindle poles.</text>
</comment>
<comment type="domain">
    <text evidence="1">The C-terminal 22 AA is required and sufficient for localization to telomeres at the nuclear envelope.</text>
</comment>
<sequence length="525" mass="58598">MDMPEDQAGGPTAKMYLWDQAEDRSLGTLLSLEEQILNSTFEACDPQRTGTVAVTHLLAYLEAVTGRGPQDARLQTLACSLDPSGEGPQATVDLDTFLVVMRDWITACQLDGGLELEEETAFEGALTSQQLPSGCPEVEDPANLESFGGEDPRPELPATADLLSSLEDLELSNRRLAGENAKLQRSVETAEEGSARLGEEISALRKQLRSTQQALQLARGVDEELEDLKTLAKSLEEQNRSLLAQARHTEKEQQRLVAEMETLQEENGKLLAERDGVKRRSEELASEKDILKRQLYECEHLICQRDAILSERTRHAESLTKTLEEYRATTQELRLEISHLEEQLSQTQEGLDELSEGAQVRRVDCTNLLPPSLGVELQAIQQRNLQEESAHPQEGREEPSTRLPRREEEDGAEIQVMVDLPLHPEDSHPGDILGNPPESSPSEPELQQALVPMVKELVPVRRPVWGQLCLWPLHLRRLRVTRHLLIPAPLLGLLLLLLLSVLLLGQSPPPTWPHLQLCYLQPPPV</sequence>
<protein>
    <recommendedName>
        <fullName evidence="6">Protein KASH5</fullName>
    </recommendedName>
    <alternativeName>
        <fullName>Coiled-coil domain-containing protein 155</fullName>
    </alternativeName>
</protein>
<evidence type="ECO:0000250" key="1"/>
<evidence type="ECO:0000250" key="2">
    <source>
        <dbReference type="UniProtKB" id="Q80VJ8"/>
    </source>
</evidence>
<evidence type="ECO:0000250" key="3">
    <source>
        <dbReference type="UniProtKB" id="Q8N6L0"/>
    </source>
</evidence>
<evidence type="ECO:0000255" key="4"/>
<evidence type="ECO:0000256" key="5">
    <source>
        <dbReference type="SAM" id="MobiDB-lite"/>
    </source>
</evidence>
<evidence type="ECO:0000305" key="6"/>
<accession>Q2T9R2</accession>
<accession>F1N496</accession>
<proteinExistence type="evidence at transcript level"/>
<feature type="chain" id="PRO_0000331526" description="Protein KASH5">
    <location>
        <begin position="1"/>
        <end position="525"/>
    </location>
</feature>
<feature type="topological domain" description="Cytoplasmic" evidence="4">
    <location>
        <begin position="1"/>
        <end position="483"/>
    </location>
</feature>
<feature type="transmembrane region" description="Helical; Anchor for type IV membrane protein" evidence="4">
    <location>
        <begin position="484"/>
        <end position="504"/>
    </location>
</feature>
<feature type="topological domain" description="Perinuclear space" evidence="4">
    <location>
        <begin position="505"/>
        <end position="525"/>
    </location>
</feature>
<feature type="region of interest" description="Disordered" evidence="5">
    <location>
        <begin position="127"/>
        <end position="156"/>
    </location>
</feature>
<feature type="region of interest" description="Disordered" evidence="5">
    <location>
        <begin position="384"/>
        <end position="409"/>
    </location>
</feature>
<feature type="region of interest" description="Disordered" evidence="5">
    <location>
        <begin position="423"/>
        <end position="444"/>
    </location>
</feature>
<feature type="coiled-coil region" evidence="4">
    <location>
        <begin position="164"/>
        <end position="360"/>
    </location>
</feature>
<feature type="compositionally biased region" description="Basic and acidic residues" evidence="5">
    <location>
        <begin position="385"/>
        <end position="408"/>
    </location>
</feature>
<feature type="sequence conflict" description="In Ref. 2; AAI11306." evidence="6" ref="2">
    <original>E</original>
    <variation>G</variation>
    <location>
        <position position="324"/>
    </location>
</feature>
<reference key="1">
    <citation type="journal article" date="2009" name="Genome Biol.">
        <title>A whole-genome assembly of the domestic cow, Bos taurus.</title>
        <authorList>
            <person name="Zimin A.V."/>
            <person name="Delcher A.L."/>
            <person name="Florea L."/>
            <person name="Kelley D.R."/>
            <person name="Schatz M.C."/>
            <person name="Puiu D."/>
            <person name="Hanrahan F."/>
            <person name="Pertea G."/>
            <person name="Van Tassell C.P."/>
            <person name="Sonstegard T.S."/>
            <person name="Marcais G."/>
            <person name="Roberts M."/>
            <person name="Subramanian P."/>
            <person name="Yorke J.A."/>
            <person name="Salzberg S.L."/>
        </authorList>
    </citation>
    <scope>NUCLEOTIDE SEQUENCE [LARGE SCALE GENOMIC DNA]</scope>
    <source>
        <strain>Hereford</strain>
    </source>
</reference>
<reference key="2">
    <citation type="submission" date="2005-12" db="EMBL/GenBank/DDBJ databases">
        <authorList>
            <consortium name="NIH - Mammalian Gene Collection (MGC) project"/>
        </authorList>
    </citation>
    <scope>NUCLEOTIDE SEQUENCE [LARGE SCALE MRNA]</scope>
    <source>
        <strain>Crossbred X Angus</strain>
        <tissue>Liver</tissue>
    </source>
</reference>
<keyword id="KW-0158">Chromosome</keyword>
<keyword id="KW-0175">Coiled coil</keyword>
<keyword id="KW-0469">Meiosis</keyword>
<keyword id="KW-0472">Membrane</keyword>
<keyword id="KW-0539">Nucleus</keyword>
<keyword id="KW-1185">Reference proteome</keyword>
<keyword id="KW-0779">Telomere</keyword>
<keyword id="KW-0812">Transmembrane</keyword>
<keyword id="KW-1133">Transmembrane helix</keyword>